<geneLocation type="chloroplast"/>
<evidence type="ECO:0000255" key="1">
    <source>
        <dbReference type="HAMAP-Rule" id="MF_01391"/>
    </source>
</evidence>
<sequence length="321" mass="36634">MLFATLEHILTHISFSTISIVITIHLITLLVRELRGLRDSSEKGMIATFFSITGFLVSRWVSSGHFPLSNLYESLIFLSWTLYILHTIPKIQNSKNDLSTITTPSTILTQGFATSGLLTEMHQSTILVPALQSQWLMMHVSMMLLSYATLLCGSLLSAALLIIRFRNSFDFFSLKKNVLRKTFFFSEIEYLYAKRSALKNTSFPVFPNYYKYQLTERLDSWSYRVISLGFTLLTVGILCGAVWANEAWGSYWNWDPKETWAFITWTIFAIYLHSRTNPNWKGTNSALVASIGFLIIWICYFGINLLGIGLHSYGSFTLPSK</sequence>
<gene>
    <name evidence="1" type="primary">ccsA</name>
</gene>
<organism>
    <name type="scientific">Saccharum officinarum</name>
    <name type="common">Sugarcane</name>
    <dbReference type="NCBI Taxonomy" id="4547"/>
    <lineage>
        <taxon>Eukaryota</taxon>
        <taxon>Viridiplantae</taxon>
        <taxon>Streptophyta</taxon>
        <taxon>Embryophyta</taxon>
        <taxon>Tracheophyta</taxon>
        <taxon>Spermatophyta</taxon>
        <taxon>Magnoliopsida</taxon>
        <taxon>Liliopsida</taxon>
        <taxon>Poales</taxon>
        <taxon>Poaceae</taxon>
        <taxon>PACMAD clade</taxon>
        <taxon>Panicoideae</taxon>
        <taxon>Andropogonodae</taxon>
        <taxon>Andropogoneae</taxon>
        <taxon>Saccharinae</taxon>
        <taxon>Saccharum</taxon>
        <taxon>Saccharum officinarum species complex</taxon>
    </lineage>
</organism>
<feature type="chain" id="PRO_0000226905" description="Cytochrome c biogenesis protein CcsA">
    <location>
        <begin position="1"/>
        <end position="321"/>
    </location>
</feature>
<feature type="transmembrane region" description="Helical" evidence="1">
    <location>
        <begin position="9"/>
        <end position="29"/>
    </location>
</feature>
<feature type="transmembrane region" description="Helical" evidence="1">
    <location>
        <begin position="44"/>
        <end position="64"/>
    </location>
</feature>
<feature type="transmembrane region" description="Helical" evidence="1">
    <location>
        <begin position="68"/>
        <end position="88"/>
    </location>
</feature>
<feature type="transmembrane region" description="Helical" evidence="1">
    <location>
        <begin position="143"/>
        <end position="163"/>
    </location>
</feature>
<feature type="transmembrane region" description="Helical" evidence="1">
    <location>
        <begin position="225"/>
        <end position="245"/>
    </location>
</feature>
<feature type="transmembrane region" description="Helical" evidence="1">
    <location>
        <begin position="259"/>
        <end position="273"/>
    </location>
</feature>
<feature type="transmembrane region" description="Helical" evidence="1">
    <location>
        <begin position="288"/>
        <end position="308"/>
    </location>
</feature>
<keyword id="KW-0150">Chloroplast</keyword>
<keyword id="KW-0201">Cytochrome c-type biogenesis</keyword>
<keyword id="KW-0472">Membrane</keyword>
<keyword id="KW-0934">Plastid</keyword>
<keyword id="KW-0793">Thylakoid</keyword>
<keyword id="KW-0812">Transmembrane</keyword>
<keyword id="KW-1133">Transmembrane helix</keyword>
<comment type="function">
    <text evidence="1">Required during biogenesis of c-type cytochromes (cytochrome c6 and cytochrome f) at the step of heme attachment.</text>
</comment>
<comment type="subunit">
    <text evidence="1">May interact with Ccs1.</text>
</comment>
<comment type="subcellular location">
    <subcellularLocation>
        <location evidence="1">Plastid</location>
        <location evidence="1">Chloroplast thylakoid membrane</location>
        <topology evidence="1">Multi-pass membrane protein</topology>
    </subcellularLocation>
</comment>
<comment type="similarity">
    <text evidence="1">Belongs to the CcmF/CycK/Ccl1/NrfE/CcsA family.</text>
</comment>
<proteinExistence type="inferred from homology"/>
<protein>
    <recommendedName>
        <fullName evidence="1">Cytochrome c biogenesis protein CcsA</fullName>
    </recommendedName>
</protein>
<reference key="1">
    <citation type="journal article" date="2004" name="DNA Res.">
        <title>Complete nucleotide sequence of the sugarcane (Saccharum officinarum) chloroplast genome: a comparative analysis of four monocot chloroplast genomes.</title>
        <authorList>
            <person name="Asano T."/>
            <person name="Tsudzuki T."/>
            <person name="Takahashi S."/>
            <person name="Shimada H."/>
            <person name="Kadowaki K."/>
        </authorList>
    </citation>
    <scope>NUCLEOTIDE SEQUENCE [LARGE SCALE GENOMIC DNA]</scope>
</reference>
<accession>Q6ENP8</accession>
<name>CCSA_SACOF</name>
<dbReference type="EMBL" id="AP006714">
    <property type="protein sequence ID" value="BAD27358.1"/>
    <property type="molecule type" value="Genomic_DNA"/>
</dbReference>
<dbReference type="RefSeq" id="YP_009389630.1">
    <property type="nucleotide sequence ID" value="NC_035224.1"/>
</dbReference>
<dbReference type="SMR" id="Q6ENP8"/>
<dbReference type="GeneID" id="33347884"/>
<dbReference type="GO" id="GO:0009535">
    <property type="term" value="C:chloroplast thylakoid membrane"/>
    <property type="evidence" value="ECO:0007669"/>
    <property type="project" value="UniProtKB-SubCell"/>
</dbReference>
<dbReference type="GO" id="GO:0005886">
    <property type="term" value="C:plasma membrane"/>
    <property type="evidence" value="ECO:0007669"/>
    <property type="project" value="TreeGrafter"/>
</dbReference>
<dbReference type="GO" id="GO:0020037">
    <property type="term" value="F:heme binding"/>
    <property type="evidence" value="ECO:0007669"/>
    <property type="project" value="InterPro"/>
</dbReference>
<dbReference type="GO" id="GO:0017004">
    <property type="term" value="P:cytochrome complex assembly"/>
    <property type="evidence" value="ECO:0007669"/>
    <property type="project" value="UniProtKB-UniRule"/>
</dbReference>
<dbReference type="HAMAP" id="MF_01391">
    <property type="entry name" value="CytC_CcsA"/>
    <property type="match status" value="1"/>
</dbReference>
<dbReference type="InterPro" id="IPR002541">
    <property type="entry name" value="Cyt_c_assembly"/>
</dbReference>
<dbReference type="InterPro" id="IPR017562">
    <property type="entry name" value="Cyt_c_biogenesis_CcsA"/>
</dbReference>
<dbReference type="InterPro" id="IPR045062">
    <property type="entry name" value="Cyt_c_biogenesis_CcsA/CcmC"/>
</dbReference>
<dbReference type="NCBIfam" id="TIGR03144">
    <property type="entry name" value="cytochr_II_ccsB"/>
    <property type="match status" value="1"/>
</dbReference>
<dbReference type="PANTHER" id="PTHR30071:SF1">
    <property type="entry name" value="CYTOCHROME B_B6 PROTEIN-RELATED"/>
    <property type="match status" value="1"/>
</dbReference>
<dbReference type="PANTHER" id="PTHR30071">
    <property type="entry name" value="HEME EXPORTER PROTEIN C"/>
    <property type="match status" value="1"/>
</dbReference>
<dbReference type="Pfam" id="PF01578">
    <property type="entry name" value="Cytochrom_C_asm"/>
    <property type="match status" value="1"/>
</dbReference>